<organism>
    <name type="scientific">Dickeya dadantii (strain 3937)</name>
    <name type="common">Erwinia chrysanthemi (strain 3937)</name>
    <dbReference type="NCBI Taxonomy" id="198628"/>
    <lineage>
        <taxon>Bacteria</taxon>
        <taxon>Pseudomonadati</taxon>
        <taxon>Pseudomonadota</taxon>
        <taxon>Gammaproteobacteria</taxon>
        <taxon>Enterobacterales</taxon>
        <taxon>Pectobacteriaceae</taxon>
        <taxon>Dickeya</taxon>
    </lineage>
</organism>
<accession>Q9EXP1</accession>
<accession>E0SGT7</accession>
<comment type="function">
    <text evidence="1 2">Participates in cysteine desulfuration mediated by SufS. Cysteine desulfuration mobilizes sulfur from L-cysteine to yield L-alanine and constitutes an essential step in sulfur metabolism for biosynthesis of a variety of sulfur-containing biomolecules. Functions as a sulfur acceptor for SufS, by mediating the direct transfer of the sulfur atom from the S-sulfanylcysteine of SufS, an intermediate product of cysteine desulfuration process (By similarity).</text>
</comment>
<comment type="pathway">
    <text>Cofactor biosynthesis; iron-sulfur cluster biosynthesis.</text>
</comment>
<comment type="subunit">
    <text>Homodimer. Interacts with SufS.</text>
</comment>
<comment type="interaction">
    <interactant intactId="EBI-2121567">
        <id>Q9EXP1</id>
    </interactant>
    <interactant intactId="EBI-2121573">
        <id>Q9EXP2</id>
        <label>sufS</label>
    </interactant>
    <organismsDiffer>false</organismsDiffer>
    <experiments>3</experiments>
</comment>
<comment type="subcellular location">
    <subcellularLocation>
        <location evidence="2">Cytoplasm</location>
    </subcellularLocation>
</comment>
<comment type="similarity">
    <text evidence="3">Belongs to the SufE family.</text>
</comment>
<name>SUFE_DICD3</name>
<sequence length="138" mass="15165">MAQLPDPQKLLRNFSRCSNWEEKYLYIIELGAGLAPLSDAQRQDGNRVSGCQSQVWIDLASNEQGNVVLHGDSDAAIVKGLIAIVFSLYQGLSVREIVELDVRPFFASLALTQHLTPSRSQGLEAMLRAVRARASALI</sequence>
<evidence type="ECO:0000250" key="1"/>
<evidence type="ECO:0000269" key="2">
    <source>
    </source>
</evidence>
<evidence type="ECO:0000305" key="3"/>
<gene>
    <name type="primary">sufE</name>
    <name type="ordered locus">Dda3937_03664</name>
</gene>
<feature type="chain" id="PRO_0000202127" description="Cysteine desulfuration protein SufE">
    <location>
        <begin position="1"/>
        <end position="138"/>
    </location>
</feature>
<feature type="active site" description="Cysteine persulfide intermediate" evidence="1">
    <location>
        <position position="51"/>
    </location>
</feature>
<keyword id="KW-0963">Cytoplasm</keyword>
<keyword id="KW-1185">Reference proteome</keyword>
<protein>
    <recommendedName>
        <fullName>Cysteine desulfuration protein SufE</fullName>
    </recommendedName>
</protein>
<reference key="1">
    <citation type="journal article" date="2001" name="Mol. Microbiol.">
        <title>SoxR-dependent response to oxidative stress and virulence of Erwinia chrysanthemi: the key role of SufC, an orphan ABC ATPase.</title>
        <authorList>
            <person name="Nachin L."/>
            <person name="El Hassouni M."/>
            <person name="Loiseau L."/>
            <person name="Expert D."/>
            <person name="Barras F."/>
        </authorList>
    </citation>
    <scope>NUCLEOTIDE SEQUENCE [GENOMIC DNA]</scope>
    <source>
        <strain>3937</strain>
    </source>
</reference>
<reference key="2">
    <citation type="journal article" date="2011" name="J. Bacteriol.">
        <title>Genome sequence of the plant-pathogenic bacterium Dickeya dadantii 3937.</title>
        <authorList>
            <person name="Glasner J.D."/>
            <person name="Yang C.H."/>
            <person name="Reverchon S."/>
            <person name="Hugouvieux-Cotte-Pattat N."/>
            <person name="Condemine G."/>
            <person name="Bohin J.P."/>
            <person name="Van Gijsegem F."/>
            <person name="Yang S."/>
            <person name="Franza T."/>
            <person name="Expert D."/>
            <person name="Plunkett G. III"/>
            <person name="San Francisco M.J."/>
            <person name="Charkowski A.O."/>
            <person name="Py B."/>
            <person name="Bell K."/>
            <person name="Rauscher L."/>
            <person name="Rodriguez-Palenzuela P."/>
            <person name="Toussaint A."/>
            <person name="Holeva M.C."/>
            <person name="He S.Y."/>
            <person name="Douet V."/>
            <person name="Boccara M."/>
            <person name="Blanco C."/>
            <person name="Toth I."/>
            <person name="Anderson B.D."/>
            <person name="Biehl B.S."/>
            <person name="Mau B."/>
            <person name="Flynn S.M."/>
            <person name="Barras F."/>
            <person name="Lindeberg M."/>
            <person name="Birch P.R."/>
            <person name="Tsuyumu S."/>
            <person name="Shi X."/>
            <person name="Hibbing M."/>
            <person name="Yap M.N."/>
            <person name="Carpentier M."/>
            <person name="Dassa E."/>
            <person name="Umehara M."/>
            <person name="Kim J.F."/>
            <person name="Rusch M."/>
            <person name="Soni P."/>
            <person name="Mayhew G.F."/>
            <person name="Fouts D.E."/>
            <person name="Gill S.R."/>
            <person name="Blattner F.R."/>
            <person name="Keen N.T."/>
            <person name="Perna N.T."/>
        </authorList>
    </citation>
    <scope>NUCLEOTIDE SEQUENCE [LARGE SCALE GENOMIC DNA]</scope>
    <source>
        <strain>3937</strain>
    </source>
</reference>
<reference key="3">
    <citation type="journal article" date="2003" name="J. Biol. Chem.">
        <title>Biogenesis of Fe-S cluster by the bacterial Suf system: SufS and SufE form a new type of cysteine desulfurase.</title>
        <authorList>
            <person name="Loiseau L."/>
            <person name="Ollagnier-de-Choudens S."/>
            <person name="Nachin L."/>
            <person name="Fontecave M."/>
            <person name="Barras F."/>
        </authorList>
    </citation>
    <scope>FUNCTION</scope>
    <scope>HOMODIMERIZATION</scope>
    <scope>SUBCELLULAR LOCATION</scope>
    <source>
        <strain>3937</strain>
    </source>
</reference>
<proteinExistence type="evidence at protein level"/>
<dbReference type="EMBL" id="AJ301654">
    <property type="protein sequence ID" value="CAC17129.1"/>
    <property type="molecule type" value="Genomic_DNA"/>
</dbReference>
<dbReference type="EMBL" id="CP002038">
    <property type="protein sequence ID" value="ADM98915.1"/>
    <property type="molecule type" value="Genomic_DNA"/>
</dbReference>
<dbReference type="RefSeq" id="WP_013318358.1">
    <property type="nucleotide sequence ID" value="NC_014500.1"/>
</dbReference>
<dbReference type="SMR" id="Q9EXP1"/>
<dbReference type="IntAct" id="Q9EXP1">
    <property type="interactions" value="1"/>
</dbReference>
<dbReference type="STRING" id="198628.Dda3937_03664"/>
<dbReference type="KEGG" id="ddd:Dda3937_03664"/>
<dbReference type="PATRIC" id="fig|198628.6.peg.2705"/>
<dbReference type="eggNOG" id="COG2166">
    <property type="taxonomic scope" value="Bacteria"/>
</dbReference>
<dbReference type="HOGENOM" id="CLU_124502_1_1_6"/>
<dbReference type="OrthoDB" id="9799320at2"/>
<dbReference type="UniPathway" id="UPA00266"/>
<dbReference type="Proteomes" id="UP000006859">
    <property type="component" value="Chromosome"/>
</dbReference>
<dbReference type="GO" id="GO:0005737">
    <property type="term" value="C:cytoplasm"/>
    <property type="evidence" value="ECO:0007669"/>
    <property type="project" value="UniProtKB-SubCell"/>
</dbReference>
<dbReference type="GO" id="GO:0016226">
    <property type="term" value="P:iron-sulfur cluster assembly"/>
    <property type="evidence" value="ECO:0007669"/>
    <property type="project" value="InterPro"/>
</dbReference>
<dbReference type="GO" id="GO:0006790">
    <property type="term" value="P:sulfur compound metabolic process"/>
    <property type="evidence" value="ECO:0007669"/>
    <property type="project" value="InterPro"/>
</dbReference>
<dbReference type="Gene3D" id="3.90.1010.10">
    <property type="match status" value="1"/>
</dbReference>
<dbReference type="HAMAP" id="MF_01832">
    <property type="entry name" value="SufE"/>
    <property type="match status" value="1"/>
</dbReference>
<dbReference type="InterPro" id="IPR023939">
    <property type="entry name" value="Cysteine_desulfuration_SufE"/>
</dbReference>
<dbReference type="InterPro" id="IPR003808">
    <property type="entry name" value="Fe-S_metab-assoc_dom"/>
</dbReference>
<dbReference type="NCBIfam" id="NF006792">
    <property type="entry name" value="PRK09296.1"/>
    <property type="match status" value="1"/>
</dbReference>
<dbReference type="PANTHER" id="PTHR43597:SF3">
    <property type="entry name" value="CYSTEINE DESULFURATION PROTEIN SUFE"/>
    <property type="match status" value="1"/>
</dbReference>
<dbReference type="PANTHER" id="PTHR43597">
    <property type="entry name" value="SULFUR ACCEPTOR PROTEIN CSDE"/>
    <property type="match status" value="1"/>
</dbReference>
<dbReference type="Pfam" id="PF02657">
    <property type="entry name" value="SufE"/>
    <property type="match status" value="1"/>
</dbReference>
<dbReference type="SUPFAM" id="SSF82649">
    <property type="entry name" value="SufE/NifU"/>
    <property type="match status" value="1"/>
</dbReference>